<reference key="1">
    <citation type="journal article" date="2002" name="Nature">
        <title>Sequence and analysis of chromosome 2 of Dictyostelium discoideum.</title>
        <authorList>
            <person name="Gloeckner G."/>
            <person name="Eichinger L."/>
            <person name="Szafranski K."/>
            <person name="Pachebat J.A."/>
            <person name="Bankier A.T."/>
            <person name="Dear P.H."/>
            <person name="Lehmann R."/>
            <person name="Baumgart C."/>
            <person name="Parra G."/>
            <person name="Abril J.F."/>
            <person name="Guigo R."/>
            <person name="Kumpf K."/>
            <person name="Tunggal B."/>
            <person name="Cox E.C."/>
            <person name="Quail M.A."/>
            <person name="Platzer M."/>
            <person name="Rosenthal A."/>
            <person name="Noegel A.A."/>
        </authorList>
    </citation>
    <scope>NUCLEOTIDE SEQUENCE [LARGE SCALE GENOMIC DNA]</scope>
    <source>
        <strain>AX4</strain>
    </source>
</reference>
<reference key="2">
    <citation type="journal article" date="2005" name="Nature">
        <title>The genome of the social amoeba Dictyostelium discoideum.</title>
        <authorList>
            <person name="Eichinger L."/>
            <person name="Pachebat J.A."/>
            <person name="Gloeckner G."/>
            <person name="Rajandream M.A."/>
            <person name="Sucgang R."/>
            <person name="Berriman M."/>
            <person name="Song J."/>
            <person name="Olsen R."/>
            <person name="Szafranski K."/>
            <person name="Xu Q."/>
            <person name="Tunggal B."/>
            <person name="Kummerfeld S."/>
            <person name="Madera M."/>
            <person name="Konfortov B.A."/>
            <person name="Rivero F."/>
            <person name="Bankier A.T."/>
            <person name="Lehmann R."/>
            <person name="Hamlin N."/>
            <person name="Davies R."/>
            <person name="Gaudet P."/>
            <person name="Fey P."/>
            <person name="Pilcher K."/>
            <person name="Chen G."/>
            <person name="Saunders D."/>
            <person name="Sodergren E.J."/>
            <person name="Davis P."/>
            <person name="Kerhornou A."/>
            <person name="Nie X."/>
            <person name="Hall N."/>
            <person name="Anjard C."/>
            <person name="Hemphill L."/>
            <person name="Bason N."/>
            <person name="Farbrother P."/>
            <person name="Desany B."/>
            <person name="Just E."/>
            <person name="Morio T."/>
            <person name="Rost R."/>
            <person name="Churcher C.M."/>
            <person name="Cooper J."/>
            <person name="Haydock S."/>
            <person name="van Driessche N."/>
            <person name="Cronin A."/>
            <person name="Goodhead I."/>
            <person name="Muzny D.M."/>
            <person name="Mourier T."/>
            <person name="Pain A."/>
            <person name="Lu M."/>
            <person name="Harper D."/>
            <person name="Lindsay R."/>
            <person name="Hauser H."/>
            <person name="James K.D."/>
            <person name="Quiles M."/>
            <person name="Madan Babu M."/>
            <person name="Saito T."/>
            <person name="Buchrieser C."/>
            <person name="Wardroper A."/>
            <person name="Felder M."/>
            <person name="Thangavelu M."/>
            <person name="Johnson D."/>
            <person name="Knights A."/>
            <person name="Loulseged H."/>
            <person name="Mungall K.L."/>
            <person name="Oliver K."/>
            <person name="Price C."/>
            <person name="Quail M.A."/>
            <person name="Urushihara H."/>
            <person name="Hernandez J."/>
            <person name="Rabbinowitsch E."/>
            <person name="Steffen D."/>
            <person name="Sanders M."/>
            <person name="Ma J."/>
            <person name="Kohara Y."/>
            <person name="Sharp S."/>
            <person name="Simmonds M.N."/>
            <person name="Spiegler S."/>
            <person name="Tivey A."/>
            <person name="Sugano S."/>
            <person name="White B."/>
            <person name="Walker D."/>
            <person name="Woodward J.R."/>
            <person name="Winckler T."/>
            <person name="Tanaka Y."/>
            <person name="Shaulsky G."/>
            <person name="Schleicher M."/>
            <person name="Weinstock G.M."/>
            <person name="Rosenthal A."/>
            <person name="Cox E.C."/>
            <person name="Chisholm R.L."/>
            <person name="Gibbs R.A."/>
            <person name="Loomis W.F."/>
            <person name="Platzer M."/>
            <person name="Kay R.R."/>
            <person name="Williams J.G."/>
            <person name="Dear P.H."/>
            <person name="Noegel A.A."/>
            <person name="Barrell B.G."/>
            <person name="Kuspa A."/>
        </authorList>
    </citation>
    <scope>NUCLEOTIDE SEQUENCE [LARGE SCALE GENOMIC DNA]</scope>
    <source>
        <strain>AX4</strain>
    </source>
</reference>
<proteinExistence type="predicted"/>
<dbReference type="EMBL" id="AAFI02000020">
    <property type="protein sequence ID" value="EAL68693.1"/>
    <property type="molecule type" value="Genomic_DNA"/>
</dbReference>
<dbReference type="RefSeq" id="XP_642660.1">
    <property type="nucleotide sequence ID" value="XM_637568.1"/>
</dbReference>
<dbReference type="SMR" id="Q8MN49"/>
<dbReference type="GlyGen" id="Q8MN49">
    <property type="glycosylation" value="1 site"/>
</dbReference>
<dbReference type="PaxDb" id="44689-DDB0169262"/>
<dbReference type="EnsemblProtists" id="EAL68693">
    <property type="protein sequence ID" value="EAL68693"/>
    <property type="gene ID" value="DDB_G0277461"/>
</dbReference>
<dbReference type="GeneID" id="8621076"/>
<dbReference type="KEGG" id="ddi:DDB_G0277461"/>
<dbReference type="dictyBase" id="DDB_G0277461"/>
<dbReference type="VEuPathDB" id="AmoebaDB:DDB_G0277461"/>
<dbReference type="HOGENOM" id="CLU_2927414_0_0_1"/>
<dbReference type="InParanoid" id="Q8MN49"/>
<dbReference type="PRO" id="PR:Q8MN49"/>
<dbReference type="Proteomes" id="UP000002195">
    <property type="component" value="Chromosome 2"/>
</dbReference>
<protein>
    <recommendedName>
        <fullName>Putative uncharacterized protein DDB_G0277461</fullName>
    </recommendedName>
</protein>
<organism>
    <name type="scientific">Dictyostelium discoideum</name>
    <name type="common">Social amoeba</name>
    <dbReference type="NCBI Taxonomy" id="44689"/>
    <lineage>
        <taxon>Eukaryota</taxon>
        <taxon>Amoebozoa</taxon>
        <taxon>Evosea</taxon>
        <taxon>Eumycetozoa</taxon>
        <taxon>Dictyostelia</taxon>
        <taxon>Dictyosteliales</taxon>
        <taxon>Dictyosteliaceae</taxon>
        <taxon>Dictyostelium</taxon>
    </lineage>
</organism>
<name>Y9262_DICDI</name>
<feature type="chain" id="PRO_0000348182" description="Putative uncharacterized protein DDB_G0277461">
    <location>
        <begin position="1"/>
        <end position="61"/>
    </location>
</feature>
<gene>
    <name type="ORF">DDB_G0277461</name>
</gene>
<sequence>MPIDRKKLSKTITGDKSSSVLFTEKLKKVPPTPFQKEFDRINESSALEYNKGLMKPKRDRE</sequence>
<accession>Q8MN49</accession>
<accession>Q54ZI2</accession>
<keyword id="KW-1185">Reference proteome</keyword>